<sequence>MNDEFSRASEHIWKYFELHAQQRMTVFNFYIAITGLLAAGIGVTLQQGGKYVLFTSLMGVFVAFISFIFWKLDQRVSILIKNAEIALQDLECQFSNEKLRIITKDNSSNLLNLGISSSWTYGKCFRISFVIVGFTGILLAITPFLMKVSTS</sequence>
<reference evidence="5" key="1">
    <citation type="journal article" date="2020" name="Microbiol. Resour. Announc.">
        <title>Complete Genome Sequences of Seven Uropathogenic Escherichia coli Strains Isolated from Postmenopausal Women with Recurrent Urinary Tract Infection.</title>
        <authorList>
            <person name="Sharon B.M."/>
            <person name="Nguyen A."/>
            <person name="Arute A.P."/>
            <person name="Hulyalkar N.V."/>
            <person name="Nguyen V.H."/>
            <person name="Zimmern P.E."/>
            <person name="De Nisco N.J."/>
        </authorList>
    </citation>
    <scope>NUCLEOTIDE SEQUENCE [LARGE SCALE GENOMIC DNA]</scope>
    <source>
        <strain>EcPF14 UPEC</strain>
    </source>
</reference>
<reference key="2">
    <citation type="journal article" date="2022" name="Nucleic Acids Res.">
        <title>Control of bacterial immune signaling by a WYL domain transcription factor.</title>
        <authorList>
            <person name="Blankenchip C.L."/>
            <person name="Nguyen J.V."/>
            <person name="Lau R.K."/>
            <person name="Ye Q."/>
            <person name="Gu Y."/>
            <person name="Corbett K.D."/>
        </authorList>
    </citation>
    <scope>FUNCTION IN VIRAL DEFENSE</scope>
    <scope>DISRUPTION PHENOTYPE</scope>
    <source>
        <strain>EcPF14 UPEC</strain>
    </source>
</reference>
<keyword id="KW-0051">Antiviral defense</keyword>
<keyword id="KW-0997">Cell inner membrane</keyword>
<keyword id="KW-1003">Cell membrane</keyword>
<keyword id="KW-0472">Membrane</keyword>
<keyword id="KW-0812">Transmembrane</keyword>
<keyword id="KW-1133">Transmembrane helix</keyword>
<dbReference type="EMBL" id="CP054230">
    <property type="protein sequence ID" value="QKY44560.1"/>
    <property type="molecule type" value="Genomic_DNA"/>
</dbReference>
<dbReference type="RefSeq" id="WP_001534688.1">
    <property type="nucleotide sequence ID" value="NZ_WIKR01000024.1"/>
</dbReference>
<dbReference type="SMR" id="P0DX81"/>
<dbReference type="GO" id="GO:0005886">
    <property type="term" value="C:plasma membrane"/>
    <property type="evidence" value="ECO:0007669"/>
    <property type="project" value="UniProtKB-SubCell"/>
</dbReference>
<dbReference type="GO" id="GO:0051607">
    <property type="term" value="P:defense response to virus"/>
    <property type="evidence" value="ECO:0007669"/>
    <property type="project" value="UniProtKB-KW"/>
</dbReference>
<evidence type="ECO:0000255" key="1"/>
<evidence type="ECO:0000269" key="2">
    <source>
    </source>
</evidence>
<evidence type="ECO:0000303" key="3">
    <source>
    </source>
</evidence>
<evidence type="ECO:0000305" key="4"/>
<evidence type="ECO:0000312" key="5">
    <source>
        <dbReference type="EMBL" id="QKY44560.1"/>
    </source>
</evidence>
<gene>
    <name evidence="3" type="primary">cap19</name>
    <name evidence="5" type="ORF">HR072_00405</name>
</gene>
<comment type="function">
    <text evidence="2 3">Membrane protein component of a CBASS (cyclic oligonucleotide-based antiphage signaling system) which provides immunity against bacteriophage (PubMed:35536256). The CD-NTase protein synthesizes cyclic nucleotides in response to infection; these serve as specific second messenger signals (PubMed:35536256). The signals activate a diverse range of effectors, leading to bacterial cell death and thus abortive phage infection (PubMed:35536256). A type III CBASS system (PubMed:35536256). Expression of this CBASS system (Cap17-CapW-CdnC-Cap7-Cap6-Cap18-Cap19) in a susceptible E.coli (strain JP313) confers resistance to bacteriophage lambda cI- (PubMed:35536256).</text>
</comment>
<comment type="subcellular location">
    <subcellularLocation>
        <location evidence="4">Cell inner membrane</location>
        <topology evidence="1">Multi-pass membrane protein</topology>
    </subcellularLocation>
</comment>
<comment type="disruption phenotype">
    <text evidence="2">Required for CBASS function; when deleted from a plasmid encoding the whole CBASS locus, CBASS no longer confers resistance to bacteriophage lambda (PubMed:35536256).</text>
</comment>
<comment type="similarity">
    <text evidence="4">Belongs to the Cap19 family.</text>
</comment>
<feature type="chain" id="PRO_0000459345" description="CD-NTase-associated protein 19">
    <location>
        <begin position="1"/>
        <end position="151"/>
    </location>
</feature>
<feature type="transmembrane region" description="Helical" evidence="1">
    <location>
        <begin position="25"/>
        <end position="45"/>
    </location>
</feature>
<feature type="transmembrane region" description="Helical" evidence="1">
    <location>
        <begin position="52"/>
        <end position="72"/>
    </location>
</feature>
<feature type="transmembrane region" description="Helical" evidence="1">
    <location>
        <begin position="127"/>
        <end position="147"/>
    </location>
</feature>
<protein>
    <recommendedName>
        <fullName evidence="3">CD-NTase-associated protein 19</fullName>
    </recommendedName>
</protein>
<accession>P0DX81</accession>
<proteinExistence type="evidence at protein level"/>
<organism>
    <name type="scientific">Escherichia coli</name>
    <dbReference type="NCBI Taxonomy" id="562"/>
    <lineage>
        <taxon>Bacteria</taxon>
        <taxon>Pseudomonadati</taxon>
        <taxon>Pseudomonadota</taxon>
        <taxon>Gammaproteobacteria</taxon>
        <taxon>Enterobacterales</taxon>
        <taxon>Enterobacteriaceae</taxon>
        <taxon>Escherichia</taxon>
    </lineage>
</organism>
<name>CAP19_ECOLX</name>